<protein>
    <recommendedName>
        <fullName evidence="1">Chromosome partition protein MukB</fullName>
    </recommendedName>
    <alternativeName>
        <fullName evidence="1">Structural maintenance of chromosome-related protein</fullName>
    </alternativeName>
</protein>
<reference key="1">
    <citation type="journal article" date="2008" name="Environ. Microbiol.">
        <title>The genome of Erwinia tasmaniensis strain Et1/99, a non-pathogenic bacterium in the genus Erwinia.</title>
        <authorList>
            <person name="Kube M."/>
            <person name="Migdoll A.M."/>
            <person name="Mueller I."/>
            <person name="Kuhl H."/>
            <person name="Beck A."/>
            <person name="Reinhardt R."/>
            <person name="Geider K."/>
        </authorList>
    </citation>
    <scope>NUCLEOTIDE SEQUENCE [LARGE SCALE GENOMIC DNA]</scope>
    <source>
        <strain>DSM 17950 / CFBP 7177 / CIP 109463 / NCPPB 4357 / Et1/99</strain>
    </source>
</reference>
<name>MUKB_ERWT9</name>
<dbReference type="EMBL" id="CU468135">
    <property type="protein sequence ID" value="CAO97176.1"/>
    <property type="molecule type" value="Genomic_DNA"/>
</dbReference>
<dbReference type="RefSeq" id="WP_012441847.1">
    <property type="nucleotide sequence ID" value="NC_010694.1"/>
</dbReference>
<dbReference type="SMR" id="B2VC99"/>
<dbReference type="STRING" id="465817.ETA_21300"/>
<dbReference type="KEGG" id="eta:ETA_21300"/>
<dbReference type="eggNOG" id="COG3096">
    <property type="taxonomic scope" value="Bacteria"/>
</dbReference>
<dbReference type="HOGENOM" id="CLU_004430_0_0_6"/>
<dbReference type="OrthoDB" id="6722439at2"/>
<dbReference type="Proteomes" id="UP000001726">
    <property type="component" value="Chromosome"/>
</dbReference>
<dbReference type="GO" id="GO:0005737">
    <property type="term" value="C:cytoplasm"/>
    <property type="evidence" value="ECO:0007669"/>
    <property type="project" value="UniProtKB-UniRule"/>
</dbReference>
<dbReference type="GO" id="GO:0009295">
    <property type="term" value="C:nucleoid"/>
    <property type="evidence" value="ECO:0007669"/>
    <property type="project" value="UniProtKB-SubCell"/>
</dbReference>
<dbReference type="GO" id="GO:0005524">
    <property type="term" value="F:ATP binding"/>
    <property type="evidence" value="ECO:0007669"/>
    <property type="project" value="UniProtKB-UniRule"/>
</dbReference>
<dbReference type="GO" id="GO:0003677">
    <property type="term" value="F:DNA binding"/>
    <property type="evidence" value="ECO:0007669"/>
    <property type="project" value="UniProtKB-UniRule"/>
</dbReference>
<dbReference type="GO" id="GO:0051301">
    <property type="term" value="P:cell division"/>
    <property type="evidence" value="ECO:0007669"/>
    <property type="project" value="UniProtKB-KW"/>
</dbReference>
<dbReference type="GO" id="GO:0030261">
    <property type="term" value="P:chromosome condensation"/>
    <property type="evidence" value="ECO:0007669"/>
    <property type="project" value="UniProtKB-KW"/>
</dbReference>
<dbReference type="GO" id="GO:0007059">
    <property type="term" value="P:chromosome segregation"/>
    <property type="evidence" value="ECO:0007669"/>
    <property type="project" value="UniProtKB-UniRule"/>
</dbReference>
<dbReference type="GO" id="GO:0006260">
    <property type="term" value="P:DNA replication"/>
    <property type="evidence" value="ECO:0007669"/>
    <property type="project" value="UniProtKB-UniRule"/>
</dbReference>
<dbReference type="FunFam" id="3.30.70.3500:FF:000001">
    <property type="entry name" value="Chromosome partition protein MukB"/>
    <property type="match status" value="1"/>
</dbReference>
<dbReference type="FunFam" id="3.40.1140.10:FF:000001">
    <property type="entry name" value="Chromosome partition protein MukB"/>
    <property type="match status" value="1"/>
</dbReference>
<dbReference type="FunFam" id="3.40.1140.10:FF:000002">
    <property type="entry name" value="Chromosome partition protein MukB"/>
    <property type="match status" value="1"/>
</dbReference>
<dbReference type="Gene3D" id="1.10.287.1490">
    <property type="match status" value="1"/>
</dbReference>
<dbReference type="Gene3D" id="1.20.58.850">
    <property type="match status" value="1"/>
</dbReference>
<dbReference type="Gene3D" id="3.40.1140.10">
    <property type="match status" value="2"/>
</dbReference>
<dbReference type="Gene3D" id="1.20.5.420">
    <property type="entry name" value="Immunoglobulin FC, subunit C"/>
    <property type="match status" value="1"/>
</dbReference>
<dbReference type="Gene3D" id="3.30.70.3500">
    <property type="entry name" value="MukB, hinge domain"/>
    <property type="match status" value="1"/>
</dbReference>
<dbReference type="HAMAP" id="MF_01800">
    <property type="entry name" value="MukB"/>
    <property type="match status" value="1"/>
</dbReference>
<dbReference type="InterPro" id="IPR012090">
    <property type="entry name" value="MukB"/>
</dbReference>
<dbReference type="InterPro" id="IPR050308">
    <property type="entry name" value="MukB/SMC"/>
</dbReference>
<dbReference type="InterPro" id="IPR032520">
    <property type="entry name" value="MukB_hinge"/>
</dbReference>
<dbReference type="InterPro" id="IPR042501">
    <property type="entry name" value="MukB_hinge_sf"/>
</dbReference>
<dbReference type="InterPro" id="IPR007406">
    <property type="entry name" value="MukB_N_dom"/>
</dbReference>
<dbReference type="InterPro" id="IPR027417">
    <property type="entry name" value="P-loop_NTPase"/>
</dbReference>
<dbReference type="NCBIfam" id="NF003422">
    <property type="entry name" value="PRK04863.1"/>
    <property type="match status" value="1"/>
</dbReference>
<dbReference type="PANTHER" id="PTHR42963">
    <property type="entry name" value="CHROMOSOME PARTITION PROTEIN MUKB"/>
    <property type="match status" value="1"/>
</dbReference>
<dbReference type="PANTHER" id="PTHR42963:SF1">
    <property type="entry name" value="DUF4476 DOMAIN-CONTAINING PROTEIN"/>
    <property type="match status" value="1"/>
</dbReference>
<dbReference type="Pfam" id="PF04310">
    <property type="entry name" value="MukB"/>
    <property type="match status" value="1"/>
</dbReference>
<dbReference type="Pfam" id="PF16330">
    <property type="entry name" value="MukB_hinge"/>
    <property type="match status" value="1"/>
</dbReference>
<dbReference type="Pfam" id="PF13558">
    <property type="entry name" value="SbcC_Walker_B"/>
    <property type="match status" value="1"/>
</dbReference>
<dbReference type="PIRSF" id="PIRSF005246">
    <property type="entry name" value="MukB"/>
    <property type="match status" value="1"/>
</dbReference>
<dbReference type="SUPFAM" id="SSF52540">
    <property type="entry name" value="P-loop containing nucleoside triphosphate hydrolases"/>
    <property type="match status" value="2"/>
</dbReference>
<accession>B2VC99</accession>
<proteinExistence type="inferred from homology"/>
<organism>
    <name type="scientific">Erwinia tasmaniensis (strain DSM 17950 / CFBP 7177 / CIP 109463 / NCPPB 4357 / Et1/99)</name>
    <dbReference type="NCBI Taxonomy" id="465817"/>
    <lineage>
        <taxon>Bacteria</taxon>
        <taxon>Pseudomonadati</taxon>
        <taxon>Pseudomonadota</taxon>
        <taxon>Gammaproteobacteria</taxon>
        <taxon>Enterobacterales</taxon>
        <taxon>Erwiniaceae</taxon>
        <taxon>Erwinia</taxon>
    </lineage>
</organism>
<gene>
    <name evidence="1" type="primary">mukB</name>
    <name type="ordered locus">ETA_21300</name>
</gene>
<keyword id="KW-0067">ATP-binding</keyword>
<keyword id="KW-0131">Cell cycle</keyword>
<keyword id="KW-0132">Cell division</keyword>
<keyword id="KW-0159">Chromosome partition</keyword>
<keyword id="KW-0175">Coiled coil</keyword>
<keyword id="KW-0963">Cytoplasm</keyword>
<keyword id="KW-0226">DNA condensation</keyword>
<keyword id="KW-0238">DNA-binding</keyword>
<keyword id="KW-0547">Nucleotide-binding</keyword>
<keyword id="KW-1185">Reference proteome</keyword>
<evidence type="ECO:0000255" key="1">
    <source>
        <dbReference type="HAMAP-Rule" id="MF_01800"/>
    </source>
</evidence>
<evidence type="ECO:0000256" key="2">
    <source>
        <dbReference type="SAM" id="MobiDB-lite"/>
    </source>
</evidence>
<feature type="chain" id="PRO_1000187477" description="Chromosome partition protein MukB">
    <location>
        <begin position="1"/>
        <end position="1483"/>
    </location>
</feature>
<feature type="region of interest" description="Flexible hinge" evidence="1">
    <location>
        <begin position="666"/>
        <end position="783"/>
    </location>
</feature>
<feature type="region of interest" description="Disordered" evidence="2">
    <location>
        <begin position="850"/>
        <end position="870"/>
    </location>
</feature>
<feature type="coiled-coil region" evidence="1">
    <location>
        <begin position="311"/>
        <end position="426"/>
    </location>
</feature>
<feature type="coiled-coil region" evidence="1">
    <location>
        <begin position="547"/>
        <end position="607"/>
    </location>
</feature>
<feature type="coiled-coil region" evidence="1">
    <location>
        <begin position="835"/>
        <end position="1115"/>
    </location>
</feature>
<feature type="coiled-coil region" evidence="1">
    <location>
        <begin position="1206"/>
        <end position="1266"/>
    </location>
</feature>
<feature type="binding site" evidence="1">
    <location>
        <begin position="34"/>
        <end position="41"/>
    </location>
    <ligand>
        <name>ATP</name>
        <dbReference type="ChEBI" id="CHEBI:30616"/>
    </ligand>
</feature>
<comment type="function">
    <text evidence="1">Plays a central role in chromosome condensation, segregation and cell cycle progression. Functions as a homodimer, which is essential for chromosome partition. Involved in negative DNA supercoiling in vivo, and by this means organize and compact chromosomes. May achieve or facilitate chromosome segregation by condensation DNA from both sides of a centrally located replisome during cell division.</text>
</comment>
<comment type="subunit">
    <text evidence="1">Homodimerization via its hinge domain. Binds to DNA via its C-terminal region. Interacts, and probably forms a ternary complex, with MukE and MukF via its C-terminal region. The complex formation is stimulated by calcium or magnesium. Interacts with tubulin-related protein FtsZ.</text>
</comment>
<comment type="subcellular location">
    <subcellularLocation>
        <location evidence="1">Cytoplasm</location>
        <location evidence="1">Nucleoid</location>
    </subcellularLocation>
    <text evidence="1">Restricted to the nucleoid region.</text>
</comment>
<comment type="domain">
    <text evidence="1">The hinge domain, which separates the large intramolecular coiled coil regions, allows the homodimerization, forming a V-shaped homodimer.</text>
</comment>
<comment type="similarity">
    <text evidence="1">Belongs to the SMC family. MukB subfamily.</text>
</comment>
<sequence length="1483" mass="169674">MIERGKFRSLTLINWNGFFARTFDLDELVTTLSGGNGAGKSTTMAAFITALIPDLTLLHFRNTTEAGATSGSRDKGLHGKLRPGVCYAALDVVNSLHQRVIVGVRLQQIAGRDRKVDIKPFSIHGLPTAINPTEILTESVSARHARVLPLSELKEKFEAMESVQFKQYNSITDYHSVMFDLGIVARRLRTAADRSKYYRLIEASLYGGISSAITRSLRDYLLPENGGVRKAFQDMEAALRENRMTLEAIRVTQSDRDLFKHLISEATNYVSADYMRHANERRIHLDAALLLRNELFTSRKQRASEQYRHIEMARELAEHNAAESDLETDYQGASDHLNLVQTALRQQEKIDRYDADLEELTFRLEEQNEVVAEAREVQEDNEARSEAAELEVDELKSQLADYQQALDVQQTRAIQYQQALQALQRAQDICQLRDLSVDNAEEWQETFQAKELEATDKLLMLEQKMSVAQAAHSQFEQAYELVTRIAGPVSRSDAWQVGRDVLRDAGNQRYHAEQLEPLRSRVSELGQRLREQQDAERLLSDFCKRYGQQVDAADLENLQAELEAQIELLNESVADAGERRMTLRQELEQLRERIARLTKQAPQWLAAQEILSQLGEQTGQALENSQQVTEFMQQLLERERETTVERDDIAARKREIERQIERLSQPGGSEDARLNHLAERFGGVLLSEIYDDVTIDDAPYFSALYGPARHAIVVPDLSLIREQLDGLDDCPEDLYLIEGDPQSFDDSVFNVEELAKAVVVKAGDRQWRYSRFPKVPLFGRAARENQLEVLRAERETLAERFATLSFDVQKIQRLHQSFSRFIGSHIGVAFEPDPEAALRQLNGRRNEVERELNNHESENQQQRQQYEQAKEGVSQLNRLLPRVSLLLDDTLQDRHEEIQERLAEAQEATRFVQQHGAQLARLEPILAVLQSDPEQHEQLTLDYQQAQQQQRDARQQAFALTEVVQRRAHFGYIDSAGMLNGTSDLNEKLRQRLEQAEAERARAREQLRQHQSQLTQYSQVLASLKSSFDAKRDMLKELQQEMQDIGVHADASAEQRARLRRDELYGALSNNRARRNQLEKQLTFCEAEMDALQKKLRRLERDYQQGREQVVSAKAGWVTVLRMVKDNGVERRLHRRELAYLGGDELRSMSDKALGALRLAVADNEHLRDVLRLSEDPKRPERKIQFYIAVYQHLRERIRQDIIRTDDPVEAIEQMEIELNRLTEELTAREQTLAISSRSVSNIIRKTIQREQNRIRQLNQGLQAVSFGQVKSVRLNVNVREAHSTLLDVLSEQHEQHQDLFKSNRLTFSEALAKLYQRLNPQIDMGQRTPQTIGEELLDYRNYLEMEVEVSRGSDGWLRAESGALSTGEAIGTGMSILVMVVQSWEEESRRLRGKDISPCRLLFLDEAARLDAKSIATLFELCDRLEMQLIIAAPENISPEKGTTYKLVRKVFNNTEHVHVVGLRGFSAEPGAATGSADVGAH</sequence>